<reference key="1">
    <citation type="journal article" date="2007" name="Proc. Natl. Acad. Sci. U.S.A.">
        <title>Genome plasticity of BCG and impact on vaccine efficacy.</title>
        <authorList>
            <person name="Brosch R."/>
            <person name="Gordon S.V."/>
            <person name="Garnier T."/>
            <person name="Eiglmeier K."/>
            <person name="Frigui W."/>
            <person name="Valenti P."/>
            <person name="Dos Santos S."/>
            <person name="Duthoy S."/>
            <person name="Lacroix C."/>
            <person name="Garcia-Pelayo C."/>
            <person name="Inwald J.K."/>
            <person name="Golby P."/>
            <person name="Garcia J.N."/>
            <person name="Hewinson R.G."/>
            <person name="Behr M.A."/>
            <person name="Quail M.A."/>
            <person name="Churcher C."/>
            <person name="Barrell B.G."/>
            <person name="Parkhill J."/>
            <person name="Cole S.T."/>
        </authorList>
    </citation>
    <scope>NUCLEOTIDE SEQUENCE [LARGE SCALE GENOMIC DNA]</scope>
    <source>
        <strain>BCG / Pasteur 1173P2</strain>
    </source>
</reference>
<evidence type="ECO:0000255" key="1">
    <source>
        <dbReference type="HAMAP-Rule" id="MF_00183"/>
    </source>
</evidence>
<accession>A1KML5</accession>
<keyword id="KW-0414">Isoprene biosynthesis</keyword>
<keyword id="KW-0464">Manganese</keyword>
<keyword id="KW-0479">Metal-binding</keyword>
<keyword id="KW-0521">NADP</keyword>
<keyword id="KW-0560">Oxidoreductase</keyword>
<sequence>MTNSTDGRADGRLRVVVLGSTGSIGTQALQVIADNPDRFEVVGLAAGGAHLDTLLRQRAQTGVTNIAVADEHAAQRVGDIPYHGSDAATRLVEQTEADVVLNALVGALGLRPTLAALKTGARLALANKESLVAGGSLVLRAARPGQIVPVDSEHSALAQCLRGGTPDEVAKLVLTASGGPFRGWSAADLEHVTPEQAGAHPTWSMGPMNTLNSASLVNKGLEVIETHLLFGIPYDRIDVVVHPQSIIHSMVTFIDGSTIAQASPPDMKLPISLALGWPRRVSGAAAACDFHTASSWEFEPLDTDVFPAVELARQAGVAGGCMTAVYNAANEEAAAAFLAGRIGFPAIVGIIADVLHAADQWAVEPATVDDVLDAQRWARERAQRAVSGMASVAIASTAKPGAAGRHASTLERS</sequence>
<dbReference type="EC" id="1.1.1.267" evidence="1"/>
<dbReference type="EMBL" id="AM408590">
    <property type="protein sequence ID" value="CAL72881.1"/>
    <property type="molecule type" value="Genomic_DNA"/>
</dbReference>
<dbReference type="RefSeq" id="WP_003414613.1">
    <property type="nucleotide sequence ID" value="NC_008769.1"/>
</dbReference>
<dbReference type="SMR" id="A1KML5"/>
<dbReference type="GeneID" id="45426858"/>
<dbReference type="KEGG" id="mbb:BCG_2892c"/>
<dbReference type="HOGENOM" id="CLU_035714_4_0_11"/>
<dbReference type="UniPathway" id="UPA00056">
    <property type="reaction ID" value="UER00092"/>
</dbReference>
<dbReference type="Proteomes" id="UP000001472">
    <property type="component" value="Chromosome"/>
</dbReference>
<dbReference type="GO" id="GO:0030604">
    <property type="term" value="F:1-deoxy-D-xylulose-5-phosphate reductoisomerase activity"/>
    <property type="evidence" value="ECO:0007669"/>
    <property type="project" value="UniProtKB-UniRule"/>
</dbReference>
<dbReference type="GO" id="GO:0030145">
    <property type="term" value="F:manganese ion binding"/>
    <property type="evidence" value="ECO:0007669"/>
    <property type="project" value="TreeGrafter"/>
</dbReference>
<dbReference type="GO" id="GO:0070402">
    <property type="term" value="F:NADPH binding"/>
    <property type="evidence" value="ECO:0007669"/>
    <property type="project" value="InterPro"/>
</dbReference>
<dbReference type="GO" id="GO:0051484">
    <property type="term" value="P:isopentenyl diphosphate biosynthetic process, methylerythritol 4-phosphate pathway involved in terpenoid biosynthetic process"/>
    <property type="evidence" value="ECO:0007669"/>
    <property type="project" value="TreeGrafter"/>
</dbReference>
<dbReference type="FunFam" id="1.10.1740.10:FF:000024">
    <property type="entry name" value="1-deoxy-D-xylulose 5-phosphate reductoisomerase"/>
    <property type="match status" value="1"/>
</dbReference>
<dbReference type="FunFam" id="3.40.50.720:FF:000045">
    <property type="entry name" value="1-deoxy-D-xylulose 5-phosphate reductoisomerase"/>
    <property type="match status" value="1"/>
</dbReference>
<dbReference type="Gene3D" id="1.10.1740.10">
    <property type="match status" value="1"/>
</dbReference>
<dbReference type="Gene3D" id="3.40.50.720">
    <property type="entry name" value="NAD(P)-binding Rossmann-like Domain"/>
    <property type="match status" value="1"/>
</dbReference>
<dbReference type="HAMAP" id="MF_00183">
    <property type="entry name" value="DXP_reductoisom"/>
    <property type="match status" value="1"/>
</dbReference>
<dbReference type="InterPro" id="IPR003821">
    <property type="entry name" value="DXP_reductoisomerase"/>
</dbReference>
<dbReference type="InterPro" id="IPR013644">
    <property type="entry name" value="DXP_reductoisomerase_C"/>
</dbReference>
<dbReference type="InterPro" id="IPR013512">
    <property type="entry name" value="DXP_reductoisomerase_N"/>
</dbReference>
<dbReference type="InterPro" id="IPR026877">
    <property type="entry name" value="DXPR_C"/>
</dbReference>
<dbReference type="InterPro" id="IPR036169">
    <property type="entry name" value="DXPR_C_sf"/>
</dbReference>
<dbReference type="InterPro" id="IPR036291">
    <property type="entry name" value="NAD(P)-bd_dom_sf"/>
</dbReference>
<dbReference type="NCBIfam" id="TIGR00243">
    <property type="entry name" value="Dxr"/>
    <property type="match status" value="1"/>
</dbReference>
<dbReference type="PANTHER" id="PTHR30525">
    <property type="entry name" value="1-DEOXY-D-XYLULOSE 5-PHOSPHATE REDUCTOISOMERASE"/>
    <property type="match status" value="1"/>
</dbReference>
<dbReference type="PANTHER" id="PTHR30525:SF0">
    <property type="entry name" value="1-DEOXY-D-XYLULOSE 5-PHOSPHATE REDUCTOISOMERASE, CHLOROPLASTIC"/>
    <property type="match status" value="1"/>
</dbReference>
<dbReference type="Pfam" id="PF08436">
    <property type="entry name" value="DXP_redisom_C"/>
    <property type="match status" value="1"/>
</dbReference>
<dbReference type="Pfam" id="PF02670">
    <property type="entry name" value="DXP_reductoisom"/>
    <property type="match status" value="1"/>
</dbReference>
<dbReference type="Pfam" id="PF13288">
    <property type="entry name" value="DXPR_C"/>
    <property type="match status" value="1"/>
</dbReference>
<dbReference type="PIRSF" id="PIRSF006205">
    <property type="entry name" value="Dxp_reductismrs"/>
    <property type="match status" value="1"/>
</dbReference>
<dbReference type="SUPFAM" id="SSF69055">
    <property type="entry name" value="1-deoxy-D-xylulose-5-phosphate reductoisomerase, C-terminal domain"/>
    <property type="match status" value="1"/>
</dbReference>
<dbReference type="SUPFAM" id="SSF55347">
    <property type="entry name" value="Glyceraldehyde-3-phosphate dehydrogenase-like, C-terminal domain"/>
    <property type="match status" value="1"/>
</dbReference>
<dbReference type="SUPFAM" id="SSF51735">
    <property type="entry name" value="NAD(P)-binding Rossmann-fold domains"/>
    <property type="match status" value="1"/>
</dbReference>
<name>DXR_MYCBP</name>
<proteinExistence type="inferred from homology"/>
<gene>
    <name evidence="1" type="primary">dxr</name>
    <name type="ordered locus">BCG_2892c</name>
</gene>
<organism>
    <name type="scientific">Mycobacterium bovis (strain BCG / Pasteur 1173P2)</name>
    <dbReference type="NCBI Taxonomy" id="410289"/>
    <lineage>
        <taxon>Bacteria</taxon>
        <taxon>Bacillati</taxon>
        <taxon>Actinomycetota</taxon>
        <taxon>Actinomycetes</taxon>
        <taxon>Mycobacteriales</taxon>
        <taxon>Mycobacteriaceae</taxon>
        <taxon>Mycobacterium</taxon>
        <taxon>Mycobacterium tuberculosis complex</taxon>
    </lineage>
</organism>
<feature type="chain" id="PRO_1000020278" description="1-deoxy-D-xylulose 5-phosphate reductoisomerase">
    <location>
        <begin position="1"/>
        <end position="413"/>
    </location>
</feature>
<feature type="binding site" evidence="1">
    <location>
        <position position="21"/>
    </location>
    <ligand>
        <name>NADPH</name>
        <dbReference type="ChEBI" id="CHEBI:57783"/>
    </ligand>
</feature>
<feature type="binding site" evidence="1">
    <location>
        <position position="22"/>
    </location>
    <ligand>
        <name>NADPH</name>
        <dbReference type="ChEBI" id="CHEBI:57783"/>
    </ligand>
</feature>
<feature type="binding site" evidence="1">
    <location>
        <position position="23"/>
    </location>
    <ligand>
        <name>NADPH</name>
        <dbReference type="ChEBI" id="CHEBI:57783"/>
    </ligand>
</feature>
<feature type="binding site" evidence="1">
    <location>
        <position position="24"/>
    </location>
    <ligand>
        <name>NADPH</name>
        <dbReference type="ChEBI" id="CHEBI:57783"/>
    </ligand>
</feature>
<feature type="binding site" evidence="1">
    <location>
        <position position="47"/>
    </location>
    <ligand>
        <name>NADPH</name>
        <dbReference type="ChEBI" id="CHEBI:57783"/>
    </ligand>
</feature>
<feature type="binding site" evidence="1">
    <location>
        <position position="127"/>
    </location>
    <ligand>
        <name>NADPH</name>
        <dbReference type="ChEBI" id="CHEBI:57783"/>
    </ligand>
</feature>
<feature type="binding site" evidence="1">
    <location>
        <position position="128"/>
    </location>
    <ligand>
        <name>1-deoxy-D-xylulose 5-phosphate</name>
        <dbReference type="ChEBI" id="CHEBI:57792"/>
    </ligand>
</feature>
<feature type="binding site" evidence="1">
    <location>
        <position position="129"/>
    </location>
    <ligand>
        <name>NADPH</name>
        <dbReference type="ChEBI" id="CHEBI:57783"/>
    </ligand>
</feature>
<feature type="binding site" evidence="1">
    <location>
        <position position="151"/>
    </location>
    <ligand>
        <name>Mn(2+)</name>
        <dbReference type="ChEBI" id="CHEBI:29035"/>
    </ligand>
</feature>
<feature type="binding site" evidence="1">
    <location>
        <position position="152"/>
    </location>
    <ligand>
        <name>1-deoxy-D-xylulose 5-phosphate</name>
        <dbReference type="ChEBI" id="CHEBI:57792"/>
    </ligand>
</feature>
<feature type="binding site" evidence="1">
    <location>
        <position position="153"/>
    </location>
    <ligand>
        <name>1-deoxy-D-xylulose 5-phosphate</name>
        <dbReference type="ChEBI" id="CHEBI:57792"/>
    </ligand>
</feature>
<feature type="binding site" evidence="1">
    <location>
        <position position="153"/>
    </location>
    <ligand>
        <name>Mn(2+)</name>
        <dbReference type="ChEBI" id="CHEBI:29035"/>
    </ligand>
</feature>
<feature type="binding site" evidence="1">
    <location>
        <position position="177"/>
    </location>
    <ligand>
        <name>1-deoxy-D-xylulose 5-phosphate</name>
        <dbReference type="ChEBI" id="CHEBI:57792"/>
    </ligand>
</feature>
<feature type="binding site" evidence="1">
    <location>
        <position position="200"/>
    </location>
    <ligand>
        <name>1-deoxy-D-xylulose 5-phosphate</name>
        <dbReference type="ChEBI" id="CHEBI:57792"/>
    </ligand>
</feature>
<feature type="binding site" evidence="1">
    <location>
        <position position="206"/>
    </location>
    <ligand>
        <name>NADPH</name>
        <dbReference type="ChEBI" id="CHEBI:57783"/>
    </ligand>
</feature>
<feature type="binding site" evidence="1">
    <location>
        <position position="213"/>
    </location>
    <ligand>
        <name>1-deoxy-D-xylulose 5-phosphate</name>
        <dbReference type="ChEBI" id="CHEBI:57792"/>
    </ligand>
</feature>
<feature type="binding site" evidence="1">
    <location>
        <position position="218"/>
    </location>
    <ligand>
        <name>1-deoxy-D-xylulose 5-phosphate</name>
        <dbReference type="ChEBI" id="CHEBI:57792"/>
    </ligand>
</feature>
<feature type="binding site" evidence="1">
    <location>
        <position position="219"/>
    </location>
    <ligand>
        <name>1-deoxy-D-xylulose 5-phosphate</name>
        <dbReference type="ChEBI" id="CHEBI:57792"/>
    </ligand>
</feature>
<feature type="binding site" evidence="1">
    <location>
        <position position="222"/>
    </location>
    <ligand>
        <name>1-deoxy-D-xylulose 5-phosphate</name>
        <dbReference type="ChEBI" id="CHEBI:57792"/>
    </ligand>
</feature>
<feature type="binding site" evidence="1">
    <location>
        <position position="222"/>
    </location>
    <ligand>
        <name>Mn(2+)</name>
        <dbReference type="ChEBI" id="CHEBI:29035"/>
    </ligand>
</feature>
<comment type="function">
    <text evidence="1">Catalyzes the NADPH-dependent rearrangement and reduction of 1-deoxy-D-xylulose-5-phosphate (DXP) to 2-C-methyl-D-erythritol 4-phosphate (MEP).</text>
</comment>
<comment type="catalytic activity">
    <reaction evidence="1">
        <text>2-C-methyl-D-erythritol 4-phosphate + NADP(+) = 1-deoxy-D-xylulose 5-phosphate + NADPH + H(+)</text>
        <dbReference type="Rhea" id="RHEA:13717"/>
        <dbReference type="ChEBI" id="CHEBI:15378"/>
        <dbReference type="ChEBI" id="CHEBI:57783"/>
        <dbReference type="ChEBI" id="CHEBI:57792"/>
        <dbReference type="ChEBI" id="CHEBI:58262"/>
        <dbReference type="ChEBI" id="CHEBI:58349"/>
        <dbReference type="EC" id="1.1.1.267"/>
    </reaction>
    <physiologicalReaction direction="right-to-left" evidence="1">
        <dbReference type="Rhea" id="RHEA:13719"/>
    </physiologicalReaction>
</comment>
<comment type="cofactor">
    <cofactor evidence="1">
        <name>Mg(2+)</name>
        <dbReference type="ChEBI" id="CHEBI:18420"/>
    </cofactor>
    <cofactor evidence="1">
        <name>Mn(2+)</name>
        <dbReference type="ChEBI" id="CHEBI:29035"/>
    </cofactor>
</comment>
<comment type="pathway">
    <text evidence="1">Isoprenoid biosynthesis; isopentenyl diphosphate biosynthesis via DXP pathway; isopentenyl diphosphate from 1-deoxy-D-xylulose 5-phosphate: step 1/6.</text>
</comment>
<comment type="similarity">
    <text evidence="1">Belongs to the DXR family.</text>
</comment>
<protein>
    <recommendedName>
        <fullName evidence="1">1-deoxy-D-xylulose 5-phosphate reductoisomerase</fullName>
        <shortName evidence="1">DXP reductoisomerase</shortName>
        <ecNumber evidence="1">1.1.1.267</ecNumber>
    </recommendedName>
    <alternativeName>
        <fullName evidence="1">1-deoxyxylulose-5-phosphate reductoisomerase</fullName>
    </alternativeName>
    <alternativeName>
        <fullName evidence="1">2-C-methyl-D-erythritol 4-phosphate synthase</fullName>
    </alternativeName>
</protein>